<gene>
    <name type="primary">BAP2</name>
    <name type="synonym">BAL</name>
    <name type="ordered locus">At2g45760</name>
    <name type="ORF">F4I18.26</name>
</gene>
<proteinExistence type="evidence at protein level"/>
<protein>
    <recommendedName>
        <fullName>BON1-associated protein 2</fullName>
    </recommendedName>
    <alternativeName>
        <fullName>Protein BON1-ASSOCIATED PROTEIN 1-LIKE</fullName>
    </alternativeName>
</protein>
<feature type="chain" id="PRO_0000399506" description="BON1-associated protein 2">
    <location>
        <begin position="1"/>
        <end position="207"/>
    </location>
</feature>
<feature type="domain" description="C2" evidence="2">
    <location>
        <begin position="1"/>
        <end position="112"/>
    </location>
</feature>
<dbReference type="EMBL" id="AC004665">
    <property type="protein sequence ID" value="AAC28548.1"/>
    <property type="status" value="ALT_SEQ"/>
    <property type="molecule type" value="Genomic_DNA"/>
</dbReference>
<dbReference type="EMBL" id="CP002685">
    <property type="protein sequence ID" value="AEC10598.1"/>
    <property type="molecule type" value="Genomic_DNA"/>
</dbReference>
<dbReference type="EMBL" id="AY954839">
    <property type="protein sequence ID" value="AAX55165.1"/>
    <property type="molecule type" value="Genomic_DNA"/>
</dbReference>
<dbReference type="EMBL" id="AY262052">
    <property type="protein sequence ID" value="AAP22496.1"/>
    <property type="molecule type" value="mRNA"/>
</dbReference>
<dbReference type="EMBL" id="BT025263">
    <property type="protein sequence ID" value="ABF19016.1"/>
    <property type="molecule type" value="mRNA"/>
</dbReference>
<dbReference type="PIR" id="T02471">
    <property type="entry name" value="T02471"/>
</dbReference>
<dbReference type="RefSeq" id="NP_182100.2">
    <property type="nucleotide sequence ID" value="NM_130139.3"/>
</dbReference>
<dbReference type="SMR" id="Q58FX0"/>
<dbReference type="FunCoup" id="Q58FX0">
    <property type="interactions" value="87"/>
</dbReference>
<dbReference type="IntAct" id="Q58FX0">
    <property type="interactions" value="3"/>
</dbReference>
<dbReference type="STRING" id="3702.Q58FX0"/>
<dbReference type="PaxDb" id="3702-AT2G45760.1"/>
<dbReference type="EnsemblPlants" id="AT2G45760.1">
    <property type="protein sequence ID" value="AT2G45760.1"/>
    <property type="gene ID" value="AT2G45760"/>
</dbReference>
<dbReference type="GeneID" id="819184"/>
<dbReference type="Gramene" id="AT2G45760.1">
    <property type="protein sequence ID" value="AT2G45760.1"/>
    <property type="gene ID" value="AT2G45760"/>
</dbReference>
<dbReference type="KEGG" id="ath:AT2G45760"/>
<dbReference type="Araport" id="AT2G45760"/>
<dbReference type="TAIR" id="AT2G45760">
    <property type="gene designation" value="BAP2"/>
</dbReference>
<dbReference type="eggNOG" id="ENOG502SU1K">
    <property type="taxonomic scope" value="Eukaryota"/>
</dbReference>
<dbReference type="HOGENOM" id="CLU_088397_1_0_1"/>
<dbReference type="InParanoid" id="Q58FX0"/>
<dbReference type="OMA" id="VEVQCKN"/>
<dbReference type="OrthoDB" id="884464at2759"/>
<dbReference type="PhylomeDB" id="Q58FX0"/>
<dbReference type="PRO" id="PR:Q58FX0"/>
<dbReference type="Proteomes" id="UP000006548">
    <property type="component" value="Chromosome 2"/>
</dbReference>
<dbReference type="ExpressionAtlas" id="Q58FX0">
    <property type="expression patterns" value="baseline and differential"/>
</dbReference>
<dbReference type="GO" id="GO:0016020">
    <property type="term" value="C:membrane"/>
    <property type="evidence" value="ECO:0007669"/>
    <property type="project" value="UniProtKB-SubCell"/>
</dbReference>
<dbReference type="GO" id="GO:0006952">
    <property type="term" value="P:defense response"/>
    <property type="evidence" value="ECO:0007669"/>
    <property type="project" value="UniProtKB-KW"/>
</dbReference>
<dbReference type="CDD" id="cd04051">
    <property type="entry name" value="C2_SRC2_like"/>
    <property type="match status" value="1"/>
</dbReference>
<dbReference type="Gene3D" id="2.60.40.150">
    <property type="entry name" value="C2 domain"/>
    <property type="match status" value="1"/>
</dbReference>
<dbReference type="InterPro" id="IPR000008">
    <property type="entry name" value="C2_dom"/>
</dbReference>
<dbReference type="InterPro" id="IPR035892">
    <property type="entry name" value="C2_domain_sf"/>
</dbReference>
<dbReference type="InterPro" id="IPR044750">
    <property type="entry name" value="C2_SRC2/BAP"/>
</dbReference>
<dbReference type="PANTHER" id="PTHR32246:SF17">
    <property type="entry name" value="BON1-ASSOCIATED PROTEIN 2"/>
    <property type="match status" value="1"/>
</dbReference>
<dbReference type="PANTHER" id="PTHR32246">
    <property type="entry name" value="INGRESSION PROTEIN FIC1"/>
    <property type="match status" value="1"/>
</dbReference>
<dbReference type="Pfam" id="PF00168">
    <property type="entry name" value="C2"/>
    <property type="match status" value="1"/>
</dbReference>
<dbReference type="SMART" id="SM00239">
    <property type="entry name" value="C2"/>
    <property type="match status" value="1"/>
</dbReference>
<dbReference type="SUPFAM" id="SSF49562">
    <property type="entry name" value="C2 domain (Calcium/lipid-binding domain, CaLB)"/>
    <property type="match status" value="1"/>
</dbReference>
<dbReference type="PROSITE" id="PS50004">
    <property type="entry name" value="C2"/>
    <property type="match status" value="1"/>
</dbReference>
<keyword id="KW-0472">Membrane</keyword>
<keyword id="KW-0611">Plant defense</keyword>
<keyword id="KW-1185">Reference proteome</keyword>
<comment type="function">
    <text evidence="1 3">Negative regulator of cell death and defense responses. Exhibits calcium-dependent phospholipid binding properties (By similarity).</text>
</comment>
<comment type="subunit">
    <text evidence="3">Interacts with BON1, BON2 and BON3.</text>
</comment>
<comment type="subcellular location">
    <subcellularLocation>
        <location evidence="1">Membrane</location>
        <topology evidence="1">Peripheral membrane protein</topology>
    </subcellularLocation>
</comment>
<comment type="tissue specificity">
    <text evidence="3">Expressed in roots, leaves, stems and flowers.</text>
</comment>
<comment type="induction">
    <text evidence="3">Down-regulated by high temperature. Up-regulated by salicylic acid, AgNO(3), chitin, cycloheximide, ozone, syringolin, salt stress and upon pathogen or nematode infection.</text>
</comment>
<comment type="disruption phenotype">
    <text evidence="3">No visible phenotype, but accelerated hypersensitive response (HR). Bap1 and bap2 double mutant is seedling lethal.</text>
</comment>
<comment type="miscellaneous">
    <text>Overexpression of BAP2 can suppress defects in bap1 mutants.</text>
</comment>
<comment type="sequence caution" evidence="4">
    <conflict type="erroneous gene model prediction">
        <sequence resource="EMBL-CDS" id="AAC28548"/>
    </conflict>
</comment>
<sequence length="207" mass="22993">MSYSTFKRSLEIEVISAEGLKVDRKPLKKKTYSVVRIDEKSWASKVDELGGSYPIWKDRFDMEMPINASVRFISIEVYYRTSGSGRDKNVGYAKIPVTDFMGGFAPQGHLNFLSYRLRDEYGDKCGIVNVSIMVKPDGNDHKSSLPSSSFAVAPVDYAACSWQATAAARNNQMWRPRTSSSMVSTAGYGGGRVVTGVPVWCAYQRPS</sequence>
<name>BAP2_ARATH</name>
<accession>Q58FX0</accession>
<accession>O80843</accession>
<accession>Q84N41</accession>
<reference key="1">
    <citation type="journal article" date="2007" name="Plant Physiol.">
        <title>The Arabidopsis BAP1 and BAP2 genes are general inhibitors of programmed cell death.</title>
        <authorList>
            <person name="Yang H."/>
            <person name="Yang S."/>
            <person name="Li Y."/>
            <person name="Hua J."/>
        </authorList>
    </citation>
    <scope>NUCLEOTIDE SEQUENCE [MRNA]</scope>
    <scope>FUNCTION</scope>
    <scope>INDUCTION BY PATHOGEN; NEMATODE; CHEMICALS AND SALT STRESS</scope>
    <scope>INTERACTION WITH BON1; BON2 AND BON3</scope>
    <scope>TISSUE SPECIFICITY</scope>
    <scope>DISRUPTION PHENOTYPE</scope>
</reference>
<reference key="2">
    <citation type="journal article" date="1999" name="Nature">
        <title>Sequence and analysis of chromosome 2 of the plant Arabidopsis thaliana.</title>
        <authorList>
            <person name="Lin X."/>
            <person name="Kaul S."/>
            <person name="Rounsley S.D."/>
            <person name="Shea T.P."/>
            <person name="Benito M.-I."/>
            <person name="Town C.D."/>
            <person name="Fujii C.Y."/>
            <person name="Mason T.M."/>
            <person name="Bowman C.L."/>
            <person name="Barnstead M.E."/>
            <person name="Feldblyum T.V."/>
            <person name="Buell C.R."/>
            <person name="Ketchum K.A."/>
            <person name="Lee J.J."/>
            <person name="Ronning C.M."/>
            <person name="Koo H.L."/>
            <person name="Moffat K.S."/>
            <person name="Cronin L.A."/>
            <person name="Shen M."/>
            <person name="Pai G."/>
            <person name="Van Aken S."/>
            <person name="Umayam L."/>
            <person name="Tallon L.J."/>
            <person name="Gill J.E."/>
            <person name="Adams M.D."/>
            <person name="Carrera A.J."/>
            <person name="Creasy T.H."/>
            <person name="Goodman H.M."/>
            <person name="Somerville C.R."/>
            <person name="Copenhaver G.P."/>
            <person name="Preuss D."/>
            <person name="Nierman W.C."/>
            <person name="White O."/>
            <person name="Eisen J.A."/>
            <person name="Salzberg S.L."/>
            <person name="Fraser C.M."/>
            <person name="Venter J.C."/>
        </authorList>
    </citation>
    <scope>NUCLEOTIDE SEQUENCE [LARGE SCALE GENOMIC DNA]</scope>
    <source>
        <strain>cv. Columbia</strain>
    </source>
</reference>
<reference key="3">
    <citation type="journal article" date="2017" name="Plant J.">
        <title>Araport11: a complete reannotation of the Arabidopsis thaliana reference genome.</title>
        <authorList>
            <person name="Cheng C.Y."/>
            <person name="Krishnakumar V."/>
            <person name="Chan A.P."/>
            <person name="Thibaud-Nissen F."/>
            <person name="Schobel S."/>
            <person name="Town C.D."/>
        </authorList>
    </citation>
    <scope>GENOME REANNOTATION</scope>
    <source>
        <strain>cv. Columbia</strain>
    </source>
</reference>
<reference key="4">
    <citation type="submission" date="2005-03" db="EMBL/GenBank/DDBJ databases">
        <authorList>
            <person name="Underwood B.A."/>
            <person name="Xiao Y.-L."/>
            <person name="Moskal W.A. Jr."/>
            <person name="Monaghan E.L."/>
            <person name="Wang W."/>
            <person name="Redman J.C."/>
            <person name="Wu H.C."/>
            <person name="Utterback T."/>
            <person name="Town C.D."/>
        </authorList>
    </citation>
    <scope>NUCLEOTIDE SEQUENCE [LARGE SCALE GENOMIC DNA]</scope>
    <source>
        <strain>cv. Columbia</strain>
    </source>
</reference>
<reference key="5">
    <citation type="journal article" date="2002" name="Plant Physiol.">
        <title>Cloning and sequencing of cDNAs for hypothetical genes from chromosome 2 of Arabidopsis.</title>
        <authorList>
            <person name="Xiao Y.-L."/>
            <person name="Malik M."/>
            <person name="Whitelaw C.A."/>
            <person name="Town C.D."/>
        </authorList>
    </citation>
    <scope>NUCLEOTIDE SEQUENCE [LARGE SCALE MRNA]</scope>
    <source>
        <strain>cv. Columbia</strain>
    </source>
</reference>
<reference key="6">
    <citation type="submission" date="2006-04" db="EMBL/GenBank/DDBJ databases">
        <title>Arabidopsis ORF clones.</title>
        <authorList>
            <person name="Shinn P."/>
            <person name="Chen H."/>
            <person name="Kim C.J."/>
            <person name="Ecker J.R."/>
        </authorList>
    </citation>
    <scope>NUCLEOTIDE SEQUENCE [LARGE SCALE MRNA]</scope>
    <source>
        <strain>cv. Columbia</strain>
    </source>
</reference>
<reference key="7">
    <citation type="journal article" date="2001" name="Genes Dev.">
        <title>Plant growth homeostasis is controlled by the Arabidopsis BON1 and BAP1 genes.</title>
        <authorList>
            <person name="Hua J."/>
            <person name="Grisafi P."/>
            <person name="Cheng S.H."/>
            <person name="Fink G.R."/>
        </authorList>
    </citation>
    <scope>IDENTIFICATION</scope>
</reference>
<evidence type="ECO:0000250" key="1"/>
<evidence type="ECO:0000255" key="2">
    <source>
        <dbReference type="PROSITE-ProRule" id="PRU00041"/>
    </source>
</evidence>
<evidence type="ECO:0000269" key="3">
    <source>
    </source>
</evidence>
<evidence type="ECO:0000305" key="4"/>
<organism>
    <name type="scientific">Arabidopsis thaliana</name>
    <name type="common">Mouse-ear cress</name>
    <dbReference type="NCBI Taxonomy" id="3702"/>
    <lineage>
        <taxon>Eukaryota</taxon>
        <taxon>Viridiplantae</taxon>
        <taxon>Streptophyta</taxon>
        <taxon>Embryophyta</taxon>
        <taxon>Tracheophyta</taxon>
        <taxon>Spermatophyta</taxon>
        <taxon>Magnoliopsida</taxon>
        <taxon>eudicotyledons</taxon>
        <taxon>Gunneridae</taxon>
        <taxon>Pentapetalae</taxon>
        <taxon>rosids</taxon>
        <taxon>malvids</taxon>
        <taxon>Brassicales</taxon>
        <taxon>Brassicaceae</taxon>
        <taxon>Camelineae</taxon>
        <taxon>Arabidopsis</taxon>
    </lineage>
</organism>